<organism>
    <name type="scientific">Ocimum basilicum</name>
    <name type="common">Sweet basil</name>
    <dbReference type="NCBI Taxonomy" id="39350"/>
    <lineage>
        <taxon>Eukaryota</taxon>
        <taxon>Viridiplantae</taxon>
        <taxon>Streptophyta</taxon>
        <taxon>Embryophyta</taxon>
        <taxon>Tracheophyta</taxon>
        <taxon>Spermatophyta</taxon>
        <taxon>Magnoliopsida</taxon>
        <taxon>eudicotyledons</taxon>
        <taxon>Gunneridae</taxon>
        <taxon>Pentapetalae</taxon>
        <taxon>asterids</taxon>
        <taxon>lamiids</taxon>
        <taxon>Lamiales</taxon>
        <taxon>Lamiaceae</taxon>
        <taxon>Nepetoideae</taxon>
        <taxon>Ocimeae</taxon>
        <taxon>Ociminae</taxon>
        <taxon>Ocimum</taxon>
    </lineage>
</organism>
<proteinExistence type="evidence at protein level"/>
<gene>
    <name type="primary">EOMT1</name>
</gene>
<accession>Q93WU2</accession>
<comment type="function">
    <text evidence="2">Phenylpropene O-methyltransferase that catalyzes the methylation of the para-4-hydroxyl of eugenol to methyleugenol. Can also convert chavicol to methylchavicol but with less affinity.</text>
</comment>
<comment type="catalytic activity">
    <reaction evidence="2">
        <text>(E)-isoeugenol + S-adenosyl-L-methionine = (E)-isomethyleugenol + S-adenosyl-L-homocysteine + H(+)</text>
        <dbReference type="Rhea" id="RHEA:17081"/>
        <dbReference type="ChEBI" id="CHEBI:6877"/>
        <dbReference type="ChEBI" id="CHEBI:15378"/>
        <dbReference type="ChEBI" id="CHEBI:50545"/>
        <dbReference type="ChEBI" id="CHEBI:57856"/>
        <dbReference type="ChEBI" id="CHEBI:59789"/>
        <dbReference type="EC" id="2.1.1.146"/>
    </reaction>
</comment>
<comment type="biophysicochemical properties">
    <kinetics>
        <KM evidence="2">10 uM for t-Isoeugenol</KM>
        <KM evidence="2">7 uM for chavicol</KM>
    </kinetics>
</comment>
<comment type="pathway">
    <text>Aromatic compound metabolism; phenylpropanoid biosynthesis.</text>
</comment>
<comment type="tissue specificity">
    <text evidence="2">Specifically expressed in the peltate glandular trichomes on the surface of the young basil leaves.</text>
</comment>
<comment type="similarity">
    <text evidence="1">Belongs to the class I-like SAM-binding methyltransferase superfamily. Cation-independent O-methyltransferase family. COMT subfamily.</text>
</comment>
<protein>
    <recommendedName>
        <fullName>Eugenol O-methyltransferase</fullName>
        <ecNumber>2.1.1.146</ecNumber>
    </recommendedName>
    <alternativeName>
        <fullName>(Iso)eugenol O-methyltransferase EOMT1</fullName>
    </alternativeName>
    <alternativeName>
        <fullName>S-adenosysl-L-methionine:(Iso)eugenol O-methyltransferase EOMT1</fullName>
    </alternativeName>
</protein>
<evidence type="ECO:0000255" key="1">
    <source>
        <dbReference type="PROSITE-ProRule" id="PRU01020"/>
    </source>
</evidence>
<evidence type="ECO:0000269" key="2">
    <source>
    </source>
</evidence>
<sequence length="357" mass="40237">MALQKVDISLSTEQLLQAQVHVWNHMYAFANSMSLKCAIQLGIPDILHKHGRPMTLSQLLQSIPINKEKTQCFQRLMRALVNSNFFIEENNSNNQEVCYWLTPASCLLLKEAPLTVTPLVQVVLDPTFTNPWHHMSEWFTHEKHATQFEAANGCTFWEKLANEPSKGRFFDEAMSCDSRLIAHVFTKDYKHVIEGIRTLVDVGGGNGTMAKAIVEAMPTIKCTVIDLPHVVAGLESTDNLNYIGGDMFQSIPSADAILLKSIIHDWDDVEGLKILKKCKDAVVMGGKVIIIDVVVGVNHDIDEVLEDQLHFDMAMMCYFNAKERTMSEWEKLIYDAGFKSYKLTPAFGVRSLIEAYP</sequence>
<name>EOMT1_OCIBA</name>
<reference key="1">
    <citation type="journal article" date="2002" name="Plant Cell">
        <title>Characterization of phenylpropene O-methyltransferases from sweet basil: facile change of substrate specificity and convergent evolution within a plant O-methyltransferase family.</title>
        <authorList>
            <person name="Gang D.R."/>
            <person name="Lavid N."/>
            <person name="Zubieta C."/>
            <person name="Chen F."/>
            <person name="Beuerle T."/>
            <person name="Lewinsohn E."/>
            <person name="Noel J.P."/>
            <person name="Pichersky E."/>
        </authorList>
    </citation>
    <scope>NUCLEOTIDE SEQUENCE [MRNA]</scope>
    <scope>FUNCTION</scope>
    <scope>ENZYME ACTIVITY</scope>
    <scope>TISSUE SPECIFICITY</scope>
    <scope>BIOPHYSICOCHEMICAL PROPERTIES</scope>
    <scope>MUTAGENESIS OF SER-261</scope>
    <source>
        <strain>cv. EMX-1</strain>
        <tissue>Peltate glandular trichome</tissue>
    </source>
</reference>
<dbReference type="EC" id="2.1.1.146"/>
<dbReference type="EMBL" id="AF435008">
    <property type="protein sequence ID" value="AAL30424.1"/>
    <property type="molecule type" value="mRNA"/>
</dbReference>
<dbReference type="SMR" id="Q93WU2"/>
<dbReference type="KEGG" id="ag:AAL30424"/>
<dbReference type="BRENDA" id="2.1.1.146">
    <property type="organism ID" value="4385"/>
</dbReference>
<dbReference type="SABIO-RK" id="Q93WU2"/>
<dbReference type="UniPathway" id="UPA00711"/>
<dbReference type="GO" id="GO:0050630">
    <property type="term" value="F:(iso)eugenol O-methyltransferase activity"/>
    <property type="evidence" value="ECO:0007669"/>
    <property type="project" value="UniProtKB-EC"/>
</dbReference>
<dbReference type="GO" id="GO:0046983">
    <property type="term" value="F:protein dimerization activity"/>
    <property type="evidence" value="ECO:0007669"/>
    <property type="project" value="InterPro"/>
</dbReference>
<dbReference type="GO" id="GO:0032259">
    <property type="term" value="P:methylation"/>
    <property type="evidence" value="ECO:0007669"/>
    <property type="project" value="UniProtKB-KW"/>
</dbReference>
<dbReference type="GO" id="GO:0009699">
    <property type="term" value="P:phenylpropanoid biosynthetic process"/>
    <property type="evidence" value="ECO:0007669"/>
    <property type="project" value="UniProtKB-UniPathway"/>
</dbReference>
<dbReference type="FunFam" id="1.10.10.10:FF:000213">
    <property type="entry name" value="Coniferyl alcohol 9-O-methyltransferase"/>
    <property type="match status" value="1"/>
</dbReference>
<dbReference type="FunFam" id="3.40.50.150:FF:000057">
    <property type="entry name" value="O-methyltransferase ZRP4"/>
    <property type="match status" value="1"/>
</dbReference>
<dbReference type="Gene3D" id="3.40.50.150">
    <property type="entry name" value="Vaccinia Virus protein VP39"/>
    <property type="match status" value="1"/>
</dbReference>
<dbReference type="Gene3D" id="1.10.10.10">
    <property type="entry name" value="Winged helix-like DNA-binding domain superfamily/Winged helix DNA-binding domain"/>
    <property type="match status" value="1"/>
</dbReference>
<dbReference type="InterPro" id="IPR016461">
    <property type="entry name" value="COMT-like"/>
</dbReference>
<dbReference type="InterPro" id="IPR001077">
    <property type="entry name" value="O_MeTrfase_dom"/>
</dbReference>
<dbReference type="InterPro" id="IPR012967">
    <property type="entry name" value="Plant_O-MeTrfase_dimerisation"/>
</dbReference>
<dbReference type="InterPro" id="IPR029063">
    <property type="entry name" value="SAM-dependent_MTases_sf"/>
</dbReference>
<dbReference type="InterPro" id="IPR036388">
    <property type="entry name" value="WH-like_DNA-bd_sf"/>
</dbReference>
<dbReference type="InterPro" id="IPR036390">
    <property type="entry name" value="WH_DNA-bd_sf"/>
</dbReference>
<dbReference type="PANTHER" id="PTHR11746">
    <property type="entry name" value="O-METHYLTRANSFERASE"/>
    <property type="match status" value="1"/>
</dbReference>
<dbReference type="Pfam" id="PF08100">
    <property type="entry name" value="Dimerisation"/>
    <property type="match status" value="1"/>
</dbReference>
<dbReference type="Pfam" id="PF00891">
    <property type="entry name" value="Methyltransf_2"/>
    <property type="match status" value="1"/>
</dbReference>
<dbReference type="PIRSF" id="PIRSF005739">
    <property type="entry name" value="O-mtase"/>
    <property type="match status" value="1"/>
</dbReference>
<dbReference type="SUPFAM" id="SSF53335">
    <property type="entry name" value="S-adenosyl-L-methionine-dependent methyltransferases"/>
    <property type="match status" value="1"/>
</dbReference>
<dbReference type="SUPFAM" id="SSF46785">
    <property type="entry name" value="Winged helix' DNA-binding domain"/>
    <property type="match status" value="1"/>
</dbReference>
<dbReference type="PROSITE" id="PS51683">
    <property type="entry name" value="SAM_OMT_II"/>
    <property type="match status" value="1"/>
</dbReference>
<feature type="chain" id="PRO_0000204435" description="Eugenol O-methyltransferase">
    <location>
        <begin position="1"/>
        <end position="357"/>
    </location>
</feature>
<feature type="active site" description="Proton acceptor" evidence="1">
    <location>
        <position position="264"/>
    </location>
</feature>
<feature type="binding site" evidence="1">
    <location>
        <position position="203"/>
    </location>
    <ligand>
        <name>S-adenosyl-L-methionine</name>
        <dbReference type="ChEBI" id="CHEBI:59789"/>
    </ligand>
</feature>
<feature type="binding site" evidence="1">
    <location>
        <position position="226"/>
    </location>
    <ligand>
        <name>S-adenosyl-L-methionine</name>
        <dbReference type="ChEBI" id="CHEBI:59789"/>
    </ligand>
</feature>
<feature type="binding site" evidence="1">
    <location>
        <position position="246"/>
    </location>
    <ligand>
        <name>S-adenosyl-L-methionine</name>
        <dbReference type="ChEBI" id="CHEBI:59789"/>
    </ligand>
</feature>
<feature type="binding site" evidence="1">
    <location>
        <position position="247"/>
    </location>
    <ligand>
        <name>S-adenosyl-L-methionine</name>
        <dbReference type="ChEBI" id="CHEBI:59789"/>
    </ligand>
</feature>
<feature type="binding site" evidence="1">
    <location>
        <position position="260"/>
    </location>
    <ligand>
        <name>S-adenosyl-L-methionine</name>
        <dbReference type="ChEBI" id="CHEBI:59789"/>
    </ligand>
</feature>
<feature type="mutagenesis site" description="Induces a substrate preference for chavicol." evidence="2">
    <original>S</original>
    <variation>F</variation>
    <location>
        <position position="261"/>
    </location>
</feature>
<keyword id="KW-0489">Methyltransferase</keyword>
<keyword id="KW-0949">S-adenosyl-L-methionine</keyword>
<keyword id="KW-0808">Transferase</keyword>